<evidence type="ECO:0000255" key="1">
    <source>
        <dbReference type="HAMAP-Rule" id="MF_00065"/>
    </source>
</evidence>
<gene>
    <name evidence="1" type="primary">cysC</name>
    <name type="ordered locus">Sbal_3405</name>
</gene>
<organism>
    <name type="scientific">Shewanella baltica (strain OS155 / ATCC BAA-1091)</name>
    <dbReference type="NCBI Taxonomy" id="325240"/>
    <lineage>
        <taxon>Bacteria</taxon>
        <taxon>Pseudomonadati</taxon>
        <taxon>Pseudomonadota</taxon>
        <taxon>Gammaproteobacteria</taxon>
        <taxon>Alteromonadales</taxon>
        <taxon>Shewanellaceae</taxon>
        <taxon>Shewanella</taxon>
    </lineage>
</organism>
<name>CYSC_SHEB5</name>
<dbReference type="EC" id="2.7.1.25" evidence="1"/>
<dbReference type="EMBL" id="CP000563">
    <property type="protein sequence ID" value="ABN62882.1"/>
    <property type="molecule type" value="Genomic_DNA"/>
</dbReference>
<dbReference type="RefSeq" id="WP_011847639.1">
    <property type="nucleotide sequence ID" value="NC_009052.1"/>
</dbReference>
<dbReference type="SMR" id="A3D819"/>
<dbReference type="STRING" id="325240.Sbal_3405"/>
<dbReference type="KEGG" id="sbl:Sbal_3405"/>
<dbReference type="HOGENOM" id="CLU_046932_1_0_6"/>
<dbReference type="OrthoDB" id="9804504at2"/>
<dbReference type="UniPathway" id="UPA00140">
    <property type="reaction ID" value="UER00205"/>
</dbReference>
<dbReference type="Proteomes" id="UP000001557">
    <property type="component" value="Chromosome"/>
</dbReference>
<dbReference type="GO" id="GO:0004020">
    <property type="term" value="F:adenylylsulfate kinase activity"/>
    <property type="evidence" value="ECO:0007669"/>
    <property type="project" value="UniProtKB-UniRule"/>
</dbReference>
<dbReference type="GO" id="GO:0005524">
    <property type="term" value="F:ATP binding"/>
    <property type="evidence" value="ECO:0007669"/>
    <property type="project" value="UniProtKB-UniRule"/>
</dbReference>
<dbReference type="GO" id="GO:0070814">
    <property type="term" value="P:hydrogen sulfide biosynthetic process"/>
    <property type="evidence" value="ECO:0007669"/>
    <property type="project" value="UniProtKB-UniRule"/>
</dbReference>
<dbReference type="GO" id="GO:0000103">
    <property type="term" value="P:sulfate assimilation"/>
    <property type="evidence" value="ECO:0007669"/>
    <property type="project" value="UniProtKB-UniRule"/>
</dbReference>
<dbReference type="CDD" id="cd02027">
    <property type="entry name" value="APSK"/>
    <property type="match status" value="1"/>
</dbReference>
<dbReference type="FunFam" id="3.40.50.300:FF:000212">
    <property type="entry name" value="Adenylyl-sulfate kinase"/>
    <property type="match status" value="1"/>
</dbReference>
<dbReference type="Gene3D" id="3.40.50.300">
    <property type="entry name" value="P-loop containing nucleotide triphosphate hydrolases"/>
    <property type="match status" value="1"/>
</dbReference>
<dbReference type="HAMAP" id="MF_00065">
    <property type="entry name" value="Adenylyl_sulf_kinase"/>
    <property type="match status" value="1"/>
</dbReference>
<dbReference type="InterPro" id="IPR002891">
    <property type="entry name" value="APS_kinase"/>
</dbReference>
<dbReference type="InterPro" id="IPR027417">
    <property type="entry name" value="P-loop_NTPase"/>
</dbReference>
<dbReference type="NCBIfam" id="TIGR00455">
    <property type="entry name" value="apsK"/>
    <property type="match status" value="1"/>
</dbReference>
<dbReference type="NCBIfam" id="NF003013">
    <property type="entry name" value="PRK03846.1"/>
    <property type="match status" value="1"/>
</dbReference>
<dbReference type="PANTHER" id="PTHR11055:SF63">
    <property type="entry name" value="ADENYLYL-SULFATE KINASE 1, CHLOROPLASTIC"/>
    <property type="match status" value="1"/>
</dbReference>
<dbReference type="PANTHER" id="PTHR11055">
    <property type="entry name" value="BIFUNCTIONAL 3'-PHOSPHOADENOSINE 5'-PHOSPHOSULFATE SYNTHASE"/>
    <property type="match status" value="1"/>
</dbReference>
<dbReference type="Pfam" id="PF01583">
    <property type="entry name" value="APS_kinase"/>
    <property type="match status" value="1"/>
</dbReference>
<dbReference type="SUPFAM" id="SSF52540">
    <property type="entry name" value="P-loop containing nucleoside triphosphate hydrolases"/>
    <property type="match status" value="1"/>
</dbReference>
<proteinExistence type="inferred from homology"/>
<protein>
    <recommendedName>
        <fullName evidence="1">Adenylyl-sulfate kinase</fullName>
        <ecNumber evidence="1">2.7.1.25</ecNumber>
    </recommendedName>
    <alternativeName>
        <fullName evidence="1">APS kinase</fullName>
    </alternativeName>
    <alternativeName>
        <fullName evidence="1">ATP adenosine-5'-phosphosulfate 3'-phosphotransferase</fullName>
    </alternativeName>
    <alternativeName>
        <fullName evidence="1">Adenosine-5'-phosphosulfate kinase</fullName>
    </alternativeName>
</protein>
<reference key="1">
    <citation type="submission" date="2007-02" db="EMBL/GenBank/DDBJ databases">
        <title>Complete sequence of chromosome of Shewanella baltica OS155.</title>
        <authorList>
            <consortium name="US DOE Joint Genome Institute"/>
            <person name="Copeland A."/>
            <person name="Lucas S."/>
            <person name="Lapidus A."/>
            <person name="Barry K."/>
            <person name="Detter J.C."/>
            <person name="Glavina del Rio T."/>
            <person name="Hammon N."/>
            <person name="Israni S."/>
            <person name="Dalin E."/>
            <person name="Tice H."/>
            <person name="Pitluck S."/>
            <person name="Sims D.R."/>
            <person name="Brettin T."/>
            <person name="Bruce D."/>
            <person name="Han C."/>
            <person name="Tapia R."/>
            <person name="Brainard J."/>
            <person name="Schmutz J."/>
            <person name="Larimer F."/>
            <person name="Land M."/>
            <person name="Hauser L."/>
            <person name="Kyrpides N."/>
            <person name="Mikhailova N."/>
            <person name="Brettar I."/>
            <person name="Klappenbach J."/>
            <person name="Konstantinidis K."/>
            <person name="Rodrigues J."/>
            <person name="Tiedje J."/>
            <person name="Richardson P."/>
        </authorList>
    </citation>
    <scope>NUCLEOTIDE SEQUENCE [LARGE SCALE GENOMIC DNA]</scope>
    <source>
        <strain>OS155 / ATCC BAA-1091</strain>
    </source>
</reference>
<keyword id="KW-0067">ATP-binding</keyword>
<keyword id="KW-0418">Kinase</keyword>
<keyword id="KW-0547">Nucleotide-binding</keyword>
<keyword id="KW-0597">Phosphoprotein</keyword>
<keyword id="KW-1185">Reference proteome</keyword>
<keyword id="KW-0808">Transferase</keyword>
<accession>A3D819</accession>
<sequence length="205" mass="22364">MTNILWHQHPVDQAARAEQKGQNPVLLWFTGLSGAGKSTLAGALERALFEAGFHTYLLDGDNVRHGLCKDLGFTVEDRDENLRRVGEVAKLMVDAGLVVLSAFISPTREERDSIRARFPTSQFIEVHVSTPLSVCEQRDPKGLYVKARSGEISNFTGISSPYEAPLAAELTIDTSKGDLATQVRALIDYLTAINVINADKAKALA</sequence>
<comment type="function">
    <text evidence="1">Catalyzes the synthesis of activated sulfate.</text>
</comment>
<comment type="catalytic activity">
    <reaction evidence="1">
        <text>adenosine 5'-phosphosulfate + ATP = 3'-phosphoadenylyl sulfate + ADP + H(+)</text>
        <dbReference type="Rhea" id="RHEA:24152"/>
        <dbReference type="ChEBI" id="CHEBI:15378"/>
        <dbReference type="ChEBI" id="CHEBI:30616"/>
        <dbReference type="ChEBI" id="CHEBI:58243"/>
        <dbReference type="ChEBI" id="CHEBI:58339"/>
        <dbReference type="ChEBI" id="CHEBI:456216"/>
        <dbReference type="EC" id="2.7.1.25"/>
    </reaction>
</comment>
<comment type="pathway">
    <text evidence="1">Sulfur metabolism; hydrogen sulfide biosynthesis; sulfite from sulfate: step 2/3.</text>
</comment>
<comment type="similarity">
    <text evidence="1">Belongs to the APS kinase family.</text>
</comment>
<feature type="chain" id="PRO_1000009022" description="Adenylyl-sulfate kinase">
    <location>
        <begin position="1"/>
        <end position="205"/>
    </location>
</feature>
<feature type="active site" description="Phosphoserine intermediate" evidence="1">
    <location>
        <position position="105"/>
    </location>
</feature>
<feature type="binding site" evidence="1">
    <location>
        <begin position="31"/>
        <end position="38"/>
    </location>
    <ligand>
        <name>ATP</name>
        <dbReference type="ChEBI" id="CHEBI:30616"/>
    </ligand>
</feature>